<protein>
    <recommendedName>
        <fullName>Relaxin</fullName>
    </recommendedName>
    <component>
        <recommendedName>
            <fullName>Relaxin B chain</fullName>
        </recommendedName>
    </component>
    <component>
        <recommendedName>
            <fullName>Relaxin A chain</fullName>
        </recommendedName>
    </component>
</protein>
<name>RELX_BALED</name>
<organism>
    <name type="scientific">Balaenoptera edeni</name>
    <name type="common">Pigmy Bryde's whale</name>
    <dbReference type="NCBI Taxonomy" id="9769"/>
    <lineage>
        <taxon>Eukaryota</taxon>
        <taxon>Metazoa</taxon>
        <taxon>Chordata</taxon>
        <taxon>Craniata</taxon>
        <taxon>Vertebrata</taxon>
        <taxon>Euteleostomi</taxon>
        <taxon>Mammalia</taxon>
        <taxon>Eutheria</taxon>
        <taxon>Laurasiatheria</taxon>
        <taxon>Artiodactyla</taxon>
        <taxon>Whippomorpha</taxon>
        <taxon>Cetacea</taxon>
        <taxon>Mysticeti</taxon>
        <taxon>Balaenopteridae</taxon>
        <taxon>Balaenoptera</taxon>
    </lineage>
</organism>
<feature type="peptide" id="PRO_0000016065" description="Relaxin B chain">
    <location>
        <begin position="1"/>
        <end position="32"/>
    </location>
</feature>
<feature type="peptide" id="PRO_0000016066" description="Relaxin A chain">
    <location>
        <begin position="33"/>
        <end position="54"/>
    </location>
</feature>
<feature type="modified residue" description="Pyrrolidone carboxylic acid" evidence="1">
    <location>
        <position position="1"/>
    </location>
</feature>
<feature type="disulfide bond" description="Interchain (between B and A chains)">
    <location>
        <begin position="10"/>
        <end position="41"/>
    </location>
</feature>
<feature type="disulfide bond" description="Interchain (between B and A chains)">
    <location>
        <begin position="22"/>
        <end position="54"/>
    </location>
</feature>
<feature type="disulfide bond">
    <location>
        <begin position="40"/>
        <end position="45"/>
    </location>
</feature>
<feature type="non-consecutive residues" evidence="2">
    <location>
        <begin position="32"/>
        <end position="33"/>
    </location>
</feature>
<sequence length="54" mass="6071">QSTNDLIKACGRELVRLWVEICGSVSWGRTALRMTLSEKCCQVGCIRKDIARLC</sequence>
<evidence type="ECO:0000269" key="1">
    <source>
    </source>
</evidence>
<evidence type="ECO:0000305" key="2"/>
<reference key="1">
    <citation type="journal article" date="1989" name="J. Biol. Chem.">
        <title>Cetacean relaxin. Isolation and sequence of relaxins from Balaenoptera acutorostrata and Balaenoptera edeni.</title>
        <authorList>
            <person name="Schwabe C."/>
            <person name="Bullesbach E.E."/>
            <person name="Heyn H."/>
            <person name="Yoshioka M."/>
        </authorList>
    </citation>
    <scope>PROTEIN SEQUENCE</scope>
    <scope>PYROGLUTAMATE FORMATION AT GLN-1</scope>
</reference>
<keyword id="KW-0165">Cleavage on pair of basic residues</keyword>
<keyword id="KW-0903">Direct protein sequencing</keyword>
<keyword id="KW-1015">Disulfide bond</keyword>
<keyword id="KW-0372">Hormone</keyword>
<keyword id="KW-0873">Pyrrolidone carboxylic acid</keyword>
<keyword id="KW-0964">Secreted</keyword>
<proteinExistence type="evidence at protein level"/>
<dbReference type="PIR" id="A32201">
    <property type="entry name" value="A32201"/>
</dbReference>
<dbReference type="SMR" id="P11185"/>
<dbReference type="GO" id="GO:0005576">
    <property type="term" value="C:extracellular region"/>
    <property type="evidence" value="ECO:0007669"/>
    <property type="project" value="UniProtKB-SubCell"/>
</dbReference>
<dbReference type="GO" id="GO:0005179">
    <property type="term" value="F:hormone activity"/>
    <property type="evidence" value="ECO:0007669"/>
    <property type="project" value="UniProtKB-KW"/>
</dbReference>
<dbReference type="CDD" id="cd04365">
    <property type="entry name" value="IlGF_relaxin_like"/>
    <property type="match status" value="1"/>
</dbReference>
<dbReference type="Gene3D" id="1.10.100.10">
    <property type="entry name" value="Insulin-like"/>
    <property type="match status" value="1"/>
</dbReference>
<dbReference type="InterPro" id="IPR016179">
    <property type="entry name" value="Insulin-like"/>
</dbReference>
<dbReference type="InterPro" id="IPR036438">
    <property type="entry name" value="Insulin-like_sf"/>
</dbReference>
<dbReference type="InterPro" id="IPR022353">
    <property type="entry name" value="Insulin_CS"/>
</dbReference>
<dbReference type="InterPro" id="IPR003235">
    <property type="entry name" value="Nem_insulin-like_b-type"/>
</dbReference>
<dbReference type="InterPro" id="IPR051042">
    <property type="entry name" value="Repro_Hormone_Insulin-like"/>
</dbReference>
<dbReference type="PANTHER" id="PTHR12004:SF13">
    <property type="entry name" value="PRORELAXIN H2"/>
    <property type="match status" value="1"/>
</dbReference>
<dbReference type="PANTHER" id="PTHR12004">
    <property type="entry name" value="RELAXIN"/>
    <property type="match status" value="1"/>
</dbReference>
<dbReference type="Pfam" id="PF03488">
    <property type="entry name" value="Ins_beta"/>
    <property type="match status" value="1"/>
</dbReference>
<dbReference type="SMART" id="SM00078">
    <property type="entry name" value="IlGF"/>
    <property type="match status" value="1"/>
</dbReference>
<dbReference type="SUPFAM" id="SSF56994">
    <property type="entry name" value="Insulin-like"/>
    <property type="match status" value="1"/>
</dbReference>
<dbReference type="PROSITE" id="PS00262">
    <property type="entry name" value="INSULIN"/>
    <property type="match status" value="1"/>
</dbReference>
<comment type="function">
    <text>Relaxin is an ovarian hormone that acts with estrogen to produce dilatation of the birth canal in many mammals.</text>
</comment>
<comment type="subunit">
    <text>Heterodimer of a B chain and an A chain linked by two disulfide bonds.</text>
</comment>
<comment type="subcellular location">
    <subcellularLocation>
        <location>Secreted</location>
    </subcellularLocation>
</comment>
<comment type="similarity">
    <text evidence="2">Belongs to the insulin family.</text>
</comment>
<accession>P11185</accession>